<reference key="1">
    <citation type="journal article" date="1996" name="J. Bacteriol.">
        <title>Ribose catabolism of Escherichia coli: characterization of the rpiB gene encoding ribose phosphate isomerase B and of the rpiR gene, which is involved in regulation of rpiB expression.</title>
        <authorList>
            <person name="Soerensen K.I."/>
            <person name="Hove-Jensen B."/>
        </authorList>
    </citation>
    <scope>NUCLEOTIDE SEQUENCE [GENOMIC DNA]</scope>
    <source>
        <strain>K12</strain>
    </source>
</reference>
<reference key="2">
    <citation type="journal article" date="1995" name="Nucleic Acids Res.">
        <title>Analysis of the Escherichia coli genome VI: DNA sequence of the region from 92.8 through 100 minutes.</title>
        <authorList>
            <person name="Burland V.D."/>
            <person name="Plunkett G. III"/>
            <person name="Sofia H.J."/>
            <person name="Daniels D.L."/>
            <person name="Blattner F.R."/>
        </authorList>
    </citation>
    <scope>NUCLEOTIDE SEQUENCE [LARGE SCALE GENOMIC DNA]</scope>
    <source>
        <strain>K12 / MG1655 / ATCC 47076</strain>
    </source>
</reference>
<reference key="3">
    <citation type="journal article" date="1997" name="Science">
        <title>The complete genome sequence of Escherichia coli K-12.</title>
        <authorList>
            <person name="Blattner F.R."/>
            <person name="Plunkett G. III"/>
            <person name="Bloch C.A."/>
            <person name="Perna N.T."/>
            <person name="Burland V."/>
            <person name="Riley M."/>
            <person name="Collado-Vides J."/>
            <person name="Glasner J.D."/>
            <person name="Rode C.K."/>
            <person name="Mayhew G.F."/>
            <person name="Gregor J."/>
            <person name="Davis N.W."/>
            <person name="Kirkpatrick H.A."/>
            <person name="Goeden M.A."/>
            <person name="Rose D.J."/>
            <person name="Mau B."/>
            <person name="Shao Y."/>
        </authorList>
    </citation>
    <scope>NUCLEOTIDE SEQUENCE [LARGE SCALE GENOMIC DNA]</scope>
    <source>
        <strain>K12 / MG1655 / ATCC 47076</strain>
    </source>
</reference>
<reference key="4">
    <citation type="journal article" date="2006" name="Mol. Syst. Biol.">
        <title>Highly accurate genome sequences of Escherichia coli K-12 strains MG1655 and W3110.</title>
        <authorList>
            <person name="Hayashi K."/>
            <person name="Morooka N."/>
            <person name="Yamamoto Y."/>
            <person name="Fujita K."/>
            <person name="Isono K."/>
            <person name="Choi S."/>
            <person name="Ohtsubo E."/>
            <person name="Baba T."/>
            <person name="Wanner B.L."/>
            <person name="Mori H."/>
            <person name="Horiuchi T."/>
        </authorList>
    </citation>
    <scope>NUCLEOTIDE SEQUENCE [LARGE SCALE GENOMIC DNA]</scope>
    <source>
        <strain>K12 / W3110 / ATCC 27325 / DSM 5911</strain>
    </source>
</reference>
<reference key="5">
    <citation type="journal article" date="1997" name="J. Bacteriol.">
        <title>The D-allose operon of Escherichia coli K-12.</title>
        <authorList>
            <person name="Kim C."/>
            <person name="Song S."/>
            <person name="Park C."/>
        </authorList>
    </citation>
    <scope>FUNCTION IN ALS REPRESSION</scope>
</reference>
<protein>
    <recommendedName>
        <fullName>HTH-type transcriptional regulator RpiR</fullName>
    </recommendedName>
    <alternativeName>
        <fullName>Als operon repressor</fullName>
    </alternativeName>
</protein>
<accession>P0ACS7</accession>
<accession>P39266</accession>
<accession>P76791</accession>
<accession>Q2M6L4</accession>
<feature type="chain" id="PRO_0000068620" description="HTH-type transcriptional regulator RpiR">
    <location>
        <begin position="1"/>
        <end position="296"/>
    </location>
</feature>
<feature type="domain" description="HTH rpiR-type" evidence="1">
    <location>
        <begin position="14"/>
        <end position="90"/>
    </location>
</feature>
<feature type="domain" description="SIS" evidence="2">
    <location>
        <begin position="134"/>
        <end position="274"/>
    </location>
</feature>
<feature type="DNA-binding region" description="H-T-H motif" evidence="1">
    <location>
        <begin position="50"/>
        <end position="69"/>
    </location>
</feature>
<evidence type="ECO:0000255" key="1">
    <source>
        <dbReference type="PROSITE-ProRule" id="PRU00390"/>
    </source>
</evidence>
<evidence type="ECO:0000255" key="2">
    <source>
        <dbReference type="PROSITE-ProRule" id="PRU00797"/>
    </source>
</evidence>
<evidence type="ECO:0000269" key="3">
    <source>
    </source>
</evidence>
<evidence type="ECO:0000305" key="4"/>
<dbReference type="EMBL" id="X82203">
    <property type="protein sequence ID" value="CAA57687.1"/>
    <property type="molecule type" value="Genomic_DNA"/>
</dbReference>
<dbReference type="EMBL" id="U14003">
    <property type="protein sequence ID" value="AAA96988.1"/>
    <property type="status" value="ALT_INIT"/>
    <property type="molecule type" value="Genomic_DNA"/>
</dbReference>
<dbReference type="EMBL" id="U00096">
    <property type="protein sequence ID" value="AAC77050.2"/>
    <property type="molecule type" value="Genomic_DNA"/>
</dbReference>
<dbReference type="EMBL" id="AP009048">
    <property type="protein sequence ID" value="BAE78092.1"/>
    <property type="molecule type" value="Genomic_DNA"/>
</dbReference>
<dbReference type="PIR" id="S56317">
    <property type="entry name" value="S56317"/>
</dbReference>
<dbReference type="RefSeq" id="NP_418513.4">
    <property type="nucleotide sequence ID" value="NC_000913.3"/>
</dbReference>
<dbReference type="RefSeq" id="WP_000083216.1">
    <property type="nucleotide sequence ID" value="NZ_STEB01000014.1"/>
</dbReference>
<dbReference type="SMR" id="P0ACS7"/>
<dbReference type="BioGRID" id="4262682">
    <property type="interactions" value="178"/>
</dbReference>
<dbReference type="FunCoup" id="P0ACS7">
    <property type="interactions" value="41"/>
</dbReference>
<dbReference type="IntAct" id="P0ACS7">
    <property type="interactions" value="5"/>
</dbReference>
<dbReference type="STRING" id="511145.b4089"/>
<dbReference type="jPOST" id="P0ACS7"/>
<dbReference type="PaxDb" id="511145-b4089"/>
<dbReference type="DNASU" id="948603"/>
<dbReference type="EnsemblBacteria" id="AAC77050">
    <property type="protein sequence ID" value="AAC77050"/>
    <property type="gene ID" value="b4089"/>
</dbReference>
<dbReference type="GeneID" id="948603"/>
<dbReference type="KEGG" id="ecj:JW4050"/>
<dbReference type="KEGG" id="eco:b4089"/>
<dbReference type="KEGG" id="ecoc:C3026_22105"/>
<dbReference type="PATRIC" id="fig|511145.12.peg.4216"/>
<dbReference type="EchoBASE" id="EB2353"/>
<dbReference type="eggNOG" id="COG1737">
    <property type="taxonomic scope" value="Bacteria"/>
</dbReference>
<dbReference type="HOGENOM" id="CLU_055769_0_5_6"/>
<dbReference type="InParanoid" id="P0ACS7"/>
<dbReference type="OMA" id="EDMILWN"/>
<dbReference type="OrthoDB" id="8582409at2"/>
<dbReference type="PhylomeDB" id="P0ACS7"/>
<dbReference type="BioCyc" id="EcoCyc:G7821-MONOMER"/>
<dbReference type="PRO" id="PR:P0ACS7"/>
<dbReference type="Proteomes" id="UP000000625">
    <property type="component" value="Chromosome"/>
</dbReference>
<dbReference type="GO" id="GO:0097367">
    <property type="term" value="F:carbohydrate derivative binding"/>
    <property type="evidence" value="ECO:0007669"/>
    <property type="project" value="InterPro"/>
</dbReference>
<dbReference type="GO" id="GO:0003677">
    <property type="term" value="F:DNA binding"/>
    <property type="evidence" value="ECO:0007669"/>
    <property type="project" value="UniProtKB-KW"/>
</dbReference>
<dbReference type="GO" id="GO:0003700">
    <property type="term" value="F:DNA-binding transcription factor activity"/>
    <property type="evidence" value="ECO:0000318"/>
    <property type="project" value="GO_Central"/>
</dbReference>
<dbReference type="GO" id="GO:1901135">
    <property type="term" value="P:carbohydrate derivative metabolic process"/>
    <property type="evidence" value="ECO:0007669"/>
    <property type="project" value="InterPro"/>
</dbReference>
<dbReference type="GO" id="GO:0045892">
    <property type="term" value="P:negative regulation of DNA-templated transcription"/>
    <property type="evidence" value="ECO:0000314"/>
    <property type="project" value="EcoCyc"/>
</dbReference>
<dbReference type="GO" id="GO:0006355">
    <property type="term" value="P:regulation of DNA-templated transcription"/>
    <property type="evidence" value="ECO:0000318"/>
    <property type="project" value="GO_Central"/>
</dbReference>
<dbReference type="CDD" id="cd05013">
    <property type="entry name" value="SIS_RpiR"/>
    <property type="match status" value="1"/>
</dbReference>
<dbReference type="FunFam" id="1.10.10.10:FF:000323">
    <property type="entry name" value="HTH-type transcriptional regulator rpiR"/>
    <property type="match status" value="1"/>
</dbReference>
<dbReference type="FunFam" id="3.40.50.10490:FF:000027">
    <property type="entry name" value="HTH-type transcriptional regulator rpiR"/>
    <property type="match status" value="1"/>
</dbReference>
<dbReference type="Gene3D" id="3.40.50.10490">
    <property type="entry name" value="Glucose-6-phosphate isomerase like protein, domain 1"/>
    <property type="match status" value="1"/>
</dbReference>
<dbReference type="Gene3D" id="1.10.10.10">
    <property type="entry name" value="Winged helix-like DNA-binding domain superfamily/Winged helix DNA-binding domain"/>
    <property type="match status" value="1"/>
</dbReference>
<dbReference type="InterPro" id="IPR009057">
    <property type="entry name" value="Homeodomain-like_sf"/>
</dbReference>
<dbReference type="InterPro" id="IPR000281">
    <property type="entry name" value="HTH_RpiR"/>
</dbReference>
<dbReference type="InterPro" id="IPR047640">
    <property type="entry name" value="RpiR-like"/>
</dbReference>
<dbReference type="InterPro" id="IPR035472">
    <property type="entry name" value="RpiR-like_SIS"/>
</dbReference>
<dbReference type="InterPro" id="IPR001347">
    <property type="entry name" value="SIS_dom"/>
</dbReference>
<dbReference type="InterPro" id="IPR046348">
    <property type="entry name" value="SIS_dom_sf"/>
</dbReference>
<dbReference type="InterPro" id="IPR036388">
    <property type="entry name" value="WH-like_DNA-bd_sf"/>
</dbReference>
<dbReference type="NCBIfam" id="NF008458">
    <property type="entry name" value="PRK11337.1"/>
    <property type="match status" value="1"/>
</dbReference>
<dbReference type="PANTHER" id="PTHR30514">
    <property type="entry name" value="GLUCOKINASE"/>
    <property type="match status" value="1"/>
</dbReference>
<dbReference type="PANTHER" id="PTHR30514:SF1">
    <property type="entry name" value="HTH-TYPE TRANSCRIPTIONAL REGULATOR HEXR-RELATED"/>
    <property type="match status" value="1"/>
</dbReference>
<dbReference type="Pfam" id="PF01418">
    <property type="entry name" value="HTH_6"/>
    <property type="match status" value="1"/>
</dbReference>
<dbReference type="Pfam" id="PF01380">
    <property type="entry name" value="SIS"/>
    <property type="match status" value="1"/>
</dbReference>
<dbReference type="SUPFAM" id="SSF46689">
    <property type="entry name" value="Homeodomain-like"/>
    <property type="match status" value="1"/>
</dbReference>
<dbReference type="SUPFAM" id="SSF53697">
    <property type="entry name" value="SIS domain"/>
    <property type="match status" value="1"/>
</dbReference>
<dbReference type="PROSITE" id="PS51071">
    <property type="entry name" value="HTH_RPIR"/>
    <property type="match status" value="1"/>
</dbReference>
<dbReference type="PROSITE" id="PS51464">
    <property type="entry name" value="SIS"/>
    <property type="match status" value="1"/>
</dbReference>
<organism>
    <name type="scientific">Escherichia coli (strain K12)</name>
    <dbReference type="NCBI Taxonomy" id="83333"/>
    <lineage>
        <taxon>Bacteria</taxon>
        <taxon>Pseudomonadati</taxon>
        <taxon>Pseudomonadota</taxon>
        <taxon>Gammaproteobacteria</taxon>
        <taxon>Enterobacterales</taxon>
        <taxon>Enterobacteriaceae</taxon>
        <taxon>Escherichia</taxon>
    </lineage>
</organism>
<keyword id="KW-0238">DNA-binding</keyword>
<keyword id="KW-1185">Reference proteome</keyword>
<keyword id="KW-0678">Repressor</keyword>
<keyword id="KW-0804">Transcription</keyword>
<keyword id="KW-0805">Transcription regulation</keyword>
<sequence length="296" mass="32362">MSQSEFDSALPNGIGLAPYLRMKQEGMTENESRIVEWLLKPGNLSCAPAIKDVAEALAVSEAMIVKVSKLLGFSGFRNLRSALEDYFSQSEQVLPSELAFDEAPQDVVNKVFNITLRTIMEGQSIVNVDEIHRAARFFYQARQRDLYGAGGSNAICADVQHKFLRIGVRCQAYPDAHIMMMSASLLQEGDVVLVVTHSGRTSDVKAAVELAKKNGAKIICITHSYHSPIAKLADYIICSPAPETPLLGRNASARILQLTLLDAFFVSVAQLNIEQANINMQKTGAIVDFFSPGALK</sequence>
<gene>
    <name type="primary">rpiR</name>
    <name type="synonym">alsR</name>
    <name type="synonym">yjcY</name>
    <name type="ordered locus">b4089</name>
    <name type="ordered locus">JW4050</name>
</gene>
<name>RPIR_ECOLI</name>
<proteinExistence type="evidence at protein level"/>
<comment type="function">
    <text evidence="3">Regulatory protein involved in rpiB gene repression. Also involved in als operon repression.</text>
</comment>
<comment type="sequence caution" evidence="4">
    <conflict type="erroneous initiation">
        <sequence resource="EMBL-CDS" id="AAA96988"/>
    </conflict>
    <text>Extended N-terminus.</text>
</comment>